<sequence>MPAKGPLTPQQLSLINRYWRAANYLSVGQIYLMKNPLLREPLQPEHIKPRLLGHWGTTPGLNFIYAHLNRIIQQRNANVIYICGPGHGGPGMVANTYLEGTYSEIYPAISEDEAGMERLFRQFSFPGGIPSHAAPETPGSIHEGGELGYALVHAYGAAFDNPDLVVACVVGDGEAETGALATSWHSNKFLNPARDGAVLPILHLNGYKIANPTVLARLSDDDLDNLFRGYGYEPFFVEGSEPADMHQKMAATLDTIFQRIQDIKKNADVHSPERPRWPMIILRSPKGWTGPKTVDGLVVENYWRAHEVPVANCRENDAHRKILEDWMKSYDPSDLFDEKGALKPELRALAPKGEARIGANPHANGGLLRKELHMPDFRQYAVNVTEPGAIEAQSTKILGDFLRDVMKLNETEKNFRIFGPDETASNRLGSVLEATNRVWMAETLDMDDHLAADGRVMEVLSEHLCQGWLEGYLLSGRHGFFSCYEAFIHIIDSMFNQHAKWLQVARELEWRKPISSLNYLLTSHVWRQDHNGFSHQDPGFVDLVANKSADIARVYFPPDANTLLWVGDHCLKTWNRVNVIVAGKQPEPQWLTMAEAEKHCEAGLGIWEWAGTEDGLEPDIVMACAGDVPTMETLAAVDLLRQSLPHLRIRVVNVVDLMVLQSPHQHPHGISDEEFDRMFTTNRPVIFAYHGYPYLIHRLVYKRTNHSNFHVRGFIEQGTTTTPFDMTVLNELDRFHLAMEAVERLPLGESVAKPLIDNFTEKLALHKDYIRQHGEDMPEIRDWKWTWPR</sequence>
<name>PHK_BRUA2</name>
<keyword id="KW-0456">Lyase</keyword>
<keyword id="KW-1185">Reference proteome</keyword>
<keyword id="KW-0786">Thiamine pyrophosphate</keyword>
<reference key="1">
    <citation type="journal article" date="2005" name="Infect. Immun.">
        <title>Whole-genome analyses of speciation events in pathogenic Brucellae.</title>
        <authorList>
            <person name="Chain P.S."/>
            <person name="Comerci D.J."/>
            <person name="Tolmasky M.E."/>
            <person name="Larimer F.W."/>
            <person name="Malfatti S.A."/>
            <person name="Vergez L.M."/>
            <person name="Aguero F."/>
            <person name="Land M.L."/>
            <person name="Ugalde R.A."/>
            <person name="Garcia E."/>
        </authorList>
    </citation>
    <scope>NUCLEOTIDE SEQUENCE [LARGE SCALE GENOMIC DNA]</scope>
    <source>
        <strain>2308</strain>
    </source>
</reference>
<comment type="cofactor">
    <cofactor evidence="1">
        <name>thiamine diphosphate</name>
        <dbReference type="ChEBI" id="CHEBI:58937"/>
    </cofactor>
</comment>
<comment type="similarity">
    <text evidence="1">Belongs to the XFP family.</text>
</comment>
<protein>
    <recommendedName>
        <fullName evidence="1">Probable phosphoketolase</fullName>
        <ecNumber evidence="1">4.1.2.-</ecNumber>
    </recommendedName>
</protein>
<dbReference type="EC" id="4.1.2.-" evidence="1"/>
<dbReference type="EMBL" id="AM040265">
    <property type="protein sequence ID" value="CAJ13002.1"/>
    <property type="molecule type" value="Genomic_DNA"/>
</dbReference>
<dbReference type="SMR" id="Q2YK44"/>
<dbReference type="STRING" id="359391.BAB2_0836"/>
<dbReference type="KEGG" id="bmf:BAB2_0836"/>
<dbReference type="HOGENOM" id="CLU_013954_2_0_5"/>
<dbReference type="Proteomes" id="UP000002719">
    <property type="component" value="Chromosome II"/>
</dbReference>
<dbReference type="GO" id="GO:0016832">
    <property type="term" value="F:aldehyde-lyase activity"/>
    <property type="evidence" value="ECO:0007669"/>
    <property type="project" value="UniProtKB-UniRule"/>
</dbReference>
<dbReference type="GO" id="GO:0005975">
    <property type="term" value="P:carbohydrate metabolic process"/>
    <property type="evidence" value="ECO:0007669"/>
    <property type="project" value="InterPro"/>
</dbReference>
<dbReference type="CDD" id="cd02011">
    <property type="entry name" value="TPP_PK"/>
    <property type="match status" value="1"/>
</dbReference>
<dbReference type="FunFam" id="3.40.50.970:FF:000091">
    <property type="entry name" value="Xylulose-5-phosphate/fructose-6-phosphate phosphoketolase"/>
    <property type="match status" value="1"/>
</dbReference>
<dbReference type="Gene3D" id="3.40.50.920">
    <property type="match status" value="1"/>
</dbReference>
<dbReference type="Gene3D" id="3.40.50.970">
    <property type="match status" value="2"/>
</dbReference>
<dbReference type="HAMAP" id="MF_01403">
    <property type="entry name" value="Phosphoketolase"/>
    <property type="match status" value="1"/>
</dbReference>
<dbReference type="InterPro" id="IPR023962">
    <property type="entry name" value="Phosphoketolase"/>
</dbReference>
<dbReference type="InterPro" id="IPR029061">
    <property type="entry name" value="THDP-binding"/>
</dbReference>
<dbReference type="InterPro" id="IPR009014">
    <property type="entry name" value="Transketo_C/PFOR_II"/>
</dbReference>
<dbReference type="InterPro" id="IPR005593">
    <property type="entry name" value="Xul5P/Fru6P_PKetolase"/>
</dbReference>
<dbReference type="InterPro" id="IPR018969">
    <property type="entry name" value="Xul5P/Fru6P_PKetolase_C"/>
</dbReference>
<dbReference type="InterPro" id="IPR019790">
    <property type="entry name" value="Xul5P/Fru6P_PKetolase_CS"/>
</dbReference>
<dbReference type="InterPro" id="IPR018970">
    <property type="entry name" value="Xul5P/Fru6P_PKetolase_N"/>
</dbReference>
<dbReference type="InterPro" id="IPR019789">
    <property type="entry name" value="Xul5P/Fru6P_PKetolase_ThDP_BS"/>
</dbReference>
<dbReference type="NCBIfam" id="NF003616">
    <property type="entry name" value="PRK05261.1-1"/>
    <property type="match status" value="1"/>
</dbReference>
<dbReference type="NCBIfam" id="NF003617">
    <property type="entry name" value="PRK05261.1-2"/>
    <property type="match status" value="1"/>
</dbReference>
<dbReference type="NCBIfam" id="NF003619">
    <property type="entry name" value="PRK05261.1-4"/>
    <property type="match status" value="1"/>
</dbReference>
<dbReference type="NCBIfam" id="NF003621">
    <property type="entry name" value="PRK05261.1-6"/>
    <property type="match status" value="1"/>
</dbReference>
<dbReference type="PANTHER" id="PTHR31273">
    <property type="entry name" value="PHOSPHOKETOLASE-RELATED"/>
    <property type="match status" value="1"/>
</dbReference>
<dbReference type="PANTHER" id="PTHR31273:SF0">
    <property type="entry name" value="PHOSPHOKETOLASE-RELATED"/>
    <property type="match status" value="1"/>
</dbReference>
<dbReference type="Pfam" id="PF03894">
    <property type="entry name" value="XFP"/>
    <property type="match status" value="1"/>
</dbReference>
<dbReference type="Pfam" id="PF09363">
    <property type="entry name" value="XFP_C"/>
    <property type="match status" value="1"/>
</dbReference>
<dbReference type="Pfam" id="PF09364">
    <property type="entry name" value="XFP_N"/>
    <property type="match status" value="1"/>
</dbReference>
<dbReference type="PIRSF" id="PIRSF017245">
    <property type="entry name" value="Phosphoketolase"/>
    <property type="match status" value="1"/>
</dbReference>
<dbReference type="SUPFAM" id="SSF52518">
    <property type="entry name" value="Thiamin diphosphate-binding fold (THDP-binding)"/>
    <property type="match status" value="2"/>
</dbReference>
<dbReference type="PROSITE" id="PS60002">
    <property type="entry name" value="PHOSPHOKETOLASE_1"/>
    <property type="match status" value="1"/>
</dbReference>
<dbReference type="PROSITE" id="PS60003">
    <property type="entry name" value="PHOSPHOKETOLASE_2"/>
    <property type="match status" value="1"/>
</dbReference>
<feature type="chain" id="PRO_1000068387" description="Probable phosphoketolase">
    <location>
        <begin position="1"/>
        <end position="789"/>
    </location>
</feature>
<gene>
    <name type="ordered locus">BAB2_0836</name>
</gene>
<evidence type="ECO:0000255" key="1">
    <source>
        <dbReference type="HAMAP-Rule" id="MF_01403"/>
    </source>
</evidence>
<accession>Q2YK44</accession>
<organism>
    <name type="scientific">Brucella abortus (strain 2308)</name>
    <dbReference type="NCBI Taxonomy" id="359391"/>
    <lineage>
        <taxon>Bacteria</taxon>
        <taxon>Pseudomonadati</taxon>
        <taxon>Pseudomonadota</taxon>
        <taxon>Alphaproteobacteria</taxon>
        <taxon>Hyphomicrobiales</taxon>
        <taxon>Brucellaceae</taxon>
        <taxon>Brucella/Ochrobactrum group</taxon>
        <taxon>Brucella</taxon>
    </lineage>
</organism>
<proteinExistence type="inferred from homology"/>